<feature type="chain" id="PRO_0000402394" description="Suppressor of silencing 2b">
    <location>
        <begin position="1"/>
        <end position="205"/>
    </location>
</feature>
<feature type="region of interest" description="Disordered" evidence="2">
    <location>
        <begin position="23"/>
        <end position="52"/>
    </location>
</feature>
<reference key="1">
    <citation type="journal article" date="1998" name="Arch. Virol.">
        <title>The sequence of RNA 1 and RNA 2 of tobacco streak virus: additional evidence for the inclusion of alfalfa mosaic virus in the genus Ilarvirus.</title>
        <authorList>
            <person name="Scott S.W."/>
            <person name="Zimmerman M.T."/>
            <person name="Ge X."/>
        </authorList>
    </citation>
    <scope>NUCLEOTIDE SEQUENCE [GENOMIC RNA]</scope>
</reference>
<evidence type="ECO:0000250" key="1"/>
<evidence type="ECO:0000256" key="2">
    <source>
        <dbReference type="SAM" id="MobiDB-lite"/>
    </source>
</evidence>
<evidence type="ECO:0000305" key="3"/>
<comment type="function">
    <text evidence="1">Acts as a suppressor of RNA-mediated gene silencing, also known as post-transcriptional gene silencing (PTGS), a mechanism of plant viral defense that limits the accumulation of viral RNAs. May directly interfere with the mobile silencing signal (By similarity).</text>
</comment>
<comment type="subcellular location">
    <subcellularLocation>
        <location evidence="1">Host nucleus</location>
    </subcellularLocation>
</comment>
<comment type="similarity">
    <text evidence="3">Belongs to the cucumovirus/ilarvirus protein 2b family.</text>
</comment>
<protein>
    <recommendedName>
        <fullName>Suppressor of silencing 2b</fullName>
    </recommendedName>
    <alternativeName>
        <fullName>Protein 2b</fullName>
    </alternativeName>
</protein>
<keyword id="KW-1048">Host nucleus</keyword>
<keyword id="KW-0945">Host-virus interaction</keyword>
<keyword id="KW-1090">Inhibition of host innate immune response by virus</keyword>
<keyword id="KW-1185">Reference proteome</keyword>
<keyword id="KW-0941">Suppressor of RNA silencing</keyword>
<keyword id="KW-0899">Viral immunoevasion</keyword>
<sequence length="205" mass="22457">MFIPILFLTLTLASADVMTLMESEPQPSTTESRPSMPPINSGKPSVTEKPGVELNPGETVKVKAEQFNTVNPVELKLEKRIPPGRVGSNCIDCAISNLPKAMFSVKVPKLNINFEVSDFPSSRLIFATLAQRVKSIPFIESLSFPSDIQRMQLRALGDVEVLIFIPKFGWKQILKLSDVVSGFDIPKIPSIAPKVESCVGDCLNS</sequence>
<organism>
    <name type="scientific">Tobacco streak virus (strain WC)</name>
    <name type="common">TSV</name>
    <dbReference type="NCBI Taxonomy" id="12318"/>
    <lineage>
        <taxon>Viruses</taxon>
        <taxon>Riboviria</taxon>
        <taxon>Orthornavirae</taxon>
        <taxon>Kitrinoviricota</taxon>
        <taxon>Alsuviricetes</taxon>
        <taxon>Martellivirales</taxon>
        <taxon>Bromoviridae</taxon>
        <taxon>Ilarvirus</taxon>
        <taxon>Tobacco streak virus</taxon>
    </lineage>
</organism>
<proteinExistence type="inferred from homology"/>
<name>2B_TOBSV</name>
<gene>
    <name type="ORF">ORF2b</name>
</gene>
<accession>P89679</accession>
<dbReference type="EMBL" id="U75538">
    <property type="protein sequence ID" value="AAB48410.1"/>
    <property type="molecule type" value="Genomic_RNA"/>
</dbReference>
<dbReference type="RefSeq" id="NP_620769.1">
    <property type="nucleotide sequence ID" value="NC_003842.1"/>
</dbReference>
<dbReference type="KEGG" id="vg:962657"/>
<dbReference type="Proteomes" id="UP000007795">
    <property type="component" value="Genome"/>
</dbReference>
<dbReference type="GO" id="GO:0042025">
    <property type="term" value="C:host cell nucleus"/>
    <property type="evidence" value="ECO:0007669"/>
    <property type="project" value="UniProtKB-SubCell"/>
</dbReference>
<dbReference type="GO" id="GO:0052170">
    <property type="term" value="P:symbiont-mediated suppression of host innate immune response"/>
    <property type="evidence" value="ECO:0007669"/>
    <property type="project" value="UniProtKB-KW"/>
</dbReference>
<organismHost>
    <name type="scientific">Asparagus officinalis</name>
    <name type="common">Garden asparagus</name>
    <dbReference type="NCBI Taxonomy" id="4686"/>
</organismHost>
<organismHost>
    <name type="scientific">Dahlia</name>
    <dbReference type="NCBI Taxonomy" id="41562"/>
</organismHost>
<organismHost>
    <name type="scientific">Glycine max</name>
    <name type="common">Soybean</name>
    <name type="synonym">Glycine hispida</name>
    <dbReference type="NCBI Taxonomy" id="3847"/>
</organismHost>
<organismHost>
    <name type="scientific">Gossypium herbaceum</name>
    <name type="common">Levant cotton</name>
    <name type="synonym">Arabian cotton</name>
    <dbReference type="NCBI Taxonomy" id="34274"/>
</organismHost>
<organismHost>
    <name type="scientific">Melilotus albus</name>
    <name type="common">White sweet clover</name>
    <name type="synonym">Melilotus officinalis subsp. albus</name>
    <dbReference type="NCBI Taxonomy" id="47082"/>
</organismHost>
<organismHost>
    <name type="scientific">Nicotiana tabacum</name>
    <name type="common">Common tobacco</name>
    <dbReference type="NCBI Taxonomy" id="4097"/>
</organismHost>
<organismHost>
    <name type="scientific">Phaseolus vulgaris</name>
    <name type="common">Kidney bean</name>
    <name type="synonym">French bean</name>
    <dbReference type="NCBI Taxonomy" id="3885"/>
</organismHost>
<organismHost>
    <name type="scientific">Rosa setigera</name>
    <dbReference type="NCBI Taxonomy" id="137000"/>
</organismHost>
<organismHost>
    <name type="scientific">Trifolium pratense</name>
    <name type="common">Red clover</name>
    <dbReference type="NCBI Taxonomy" id="57577"/>
</organismHost>